<organism>
    <name type="scientific">Shigella flexneri serotype 5b (strain 8401)</name>
    <dbReference type="NCBI Taxonomy" id="373384"/>
    <lineage>
        <taxon>Bacteria</taxon>
        <taxon>Pseudomonadati</taxon>
        <taxon>Pseudomonadota</taxon>
        <taxon>Gammaproteobacteria</taxon>
        <taxon>Enterobacterales</taxon>
        <taxon>Enterobacteriaceae</taxon>
        <taxon>Shigella</taxon>
    </lineage>
</organism>
<comment type="function">
    <text evidence="1">NDH-1 shuttles electrons from NADH, via FMN and iron-sulfur (Fe-S) centers, to quinones in the respiratory chain. The immediate electron acceptor for the enzyme in this species is believed to be ubiquinone. Couples the redox reaction to proton translocation (for every two electrons transferred, four hydrogen ions are translocated across the cytoplasmic membrane), and thus conserves the redox energy in a proton gradient.</text>
</comment>
<comment type="catalytic activity">
    <reaction evidence="1">
        <text>a quinone + NADH + 5 H(+)(in) = a quinol + NAD(+) + 4 H(+)(out)</text>
        <dbReference type="Rhea" id="RHEA:57888"/>
        <dbReference type="ChEBI" id="CHEBI:15378"/>
        <dbReference type="ChEBI" id="CHEBI:24646"/>
        <dbReference type="ChEBI" id="CHEBI:57540"/>
        <dbReference type="ChEBI" id="CHEBI:57945"/>
        <dbReference type="ChEBI" id="CHEBI:132124"/>
    </reaction>
</comment>
<comment type="cofactor">
    <cofactor evidence="1">
        <name>[4Fe-4S] cluster</name>
        <dbReference type="ChEBI" id="CHEBI:49883"/>
    </cofactor>
    <text evidence="1">Binds 2 [4Fe-4S] clusters per subunit.</text>
</comment>
<comment type="subunit">
    <text evidence="1">NDH-1 is composed of 13 different subunits. Subunits NuoA, H, J, K, L, M, N constitute the membrane sector of the complex.</text>
</comment>
<comment type="subcellular location">
    <subcellularLocation>
        <location evidence="1">Cell inner membrane</location>
        <topology evidence="1">Peripheral membrane protein</topology>
    </subcellularLocation>
</comment>
<comment type="similarity">
    <text evidence="1">Belongs to the complex I 23 kDa subunit family.</text>
</comment>
<dbReference type="EC" id="7.1.1.-" evidence="1"/>
<dbReference type="EMBL" id="CP000266">
    <property type="protein sequence ID" value="ABF04459.1"/>
    <property type="molecule type" value="Genomic_DNA"/>
</dbReference>
<dbReference type="RefSeq" id="WP_000172749.1">
    <property type="nucleotide sequence ID" value="NC_008258.1"/>
</dbReference>
<dbReference type="SMR" id="Q0T2K6"/>
<dbReference type="GeneID" id="89517116"/>
<dbReference type="KEGG" id="sfv:SFV_2348"/>
<dbReference type="HOGENOM" id="CLU_067218_4_3_6"/>
<dbReference type="Proteomes" id="UP000000659">
    <property type="component" value="Chromosome"/>
</dbReference>
<dbReference type="GO" id="GO:0005886">
    <property type="term" value="C:plasma membrane"/>
    <property type="evidence" value="ECO:0007669"/>
    <property type="project" value="UniProtKB-SubCell"/>
</dbReference>
<dbReference type="GO" id="GO:0051539">
    <property type="term" value="F:4 iron, 4 sulfur cluster binding"/>
    <property type="evidence" value="ECO:0007669"/>
    <property type="project" value="UniProtKB-KW"/>
</dbReference>
<dbReference type="GO" id="GO:0005506">
    <property type="term" value="F:iron ion binding"/>
    <property type="evidence" value="ECO:0007669"/>
    <property type="project" value="UniProtKB-UniRule"/>
</dbReference>
<dbReference type="GO" id="GO:0050136">
    <property type="term" value="F:NADH:ubiquinone reductase (non-electrogenic) activity"/>
    <property type="evidence" value="ECO:0007669"/>
    <property type="project" value="UniProtKB-UniRule"/>
</dbReference>
<dbReference type="GO" id="GO:0048038">
    <property type="term" value="F:quinone binding"/>
    <property type="evidence" value="ECO:0007669"/>
    <property type="project" value="UniProtKB-KW"/>
</dbReference>
<dbReference type="GO" id="GO:0009060">
    <property type="term" value="P:aerobic respiration"/>
    <property type="evidence" value="ECO:0007669"/>
    <property type="project" value="TreeGrafter"/>
</dbReference>
<dbReference type="FunFam" id="3.30.70.3270:FF:000002">
    <property type="entry name" value="NADH-quinone oxidoreductase subunit I"/>
    <property type="match status" value="1"/>
</dbReference>
<dbReference type="Gene3D" id="3.30.70.3270">
    <property type="match status" value="1"/>
</dbReference>
<dbReference type="HAMAP" id="MF_01351">
    <property type="entry name" value="NDH1_NuoI"/>
    <property type="match status" value="1"/>
</dbReference>
<dbReference type="InterPro" id="IPR017896">
    <property type="entry name" value="4Fe4S_Fe-S-bd"/>
</dbReference>
<dbReference type="InterPro" id="IPR017900">
    <property type="entry name" value="4Fe4S_Fe_S_CS"/>
</dbReference>
<dbReference type="InterPro" id="IPR010226">
    <property type="entry name" value="NADH_quinone_OxRdtase_chainI"/>
</dbReference>
<dbReference type="NCBIfam" id="TIGR01971">
    <property type="entry name" value="NuoI"/>
    <property type="match status" value="1"/>
</dbReference>
<dbReference type="NCBIfam" id="NF004536">
    <property type="entry name" value="PRK05888.1-1"/>
    <property type="match status" value="1"/>
</dbReference>
<dbReference type="PANTHER" id="PTHR10849:SF20">
    <property type="entry name" value="NADH DEHYDROGENASE [UBIQUINONE] IRON-SULFUR PROTEIN 8, MITOCHONDRIAL"/>
    <property type="match status" value="1"/>
</dbReference>
<dbReference type="PANTHER" id="PTHR10849">
    <property type="entry name" value="NADH DEHYDROGENASE UBIQUINONE IRON-SULFUR PROTEIN 8, MITOCHONDRIAL"/>
    <property type="match status" value="1"/>
</dbReference>
<dbReference type="Pfam" id="PF12838">
    <property type="entry name" value="Fer4_7"/>
    <property type="match status" value="1"/>
</dbReference>
<dbReference type="SUPFAM" id="SSF54862">
    <property type="entry name" value="4Fe-4S ferredoxins"/>
    <property type="match status" value="1"/>
</dbReference>
<dbReference type="PROSITE" id="PS00198">
    <property type="entry name" value="4FE4S_FER_1"/>
    <property type="match status" value="2"/>
</dbReference>
<dbReference type="PROSITE" id="PS51379">
    <property type="entry name" value="4FE4S_FER_2"/>
    <property type="match status" value="2"/>
</dbReference>
<gene>
    <name evidence="1" type="primary">nuoI</name>
    <name type="ordered locus">SFV_2348</name>
</gene>
<proteinExistence type="inferred from homology"/>
<sequence>MTLKELLVGFGTQVRSIWMIGLHAFAKRETRMYPEEPVYLPPRYRGRIVLTRDPDGEERCVACNLCAVACPVGCISLQKAETKDGRWYPEFFRINFSRCIFCGLCEEACPTTAIQLTPDFEMGEYKRQDLVYEKEDLLISGPGKYPEYNFYRMAGMAIDGKDKGEAENEAKPIDVKSLLP</sequence>
<name>NUOI_SHIF8</name>
<feature type="chain" id="PRO_0000298548" description="NADH-quinone oxidoreductase subunit I">
    <location>
        <begin position="1"/>
        <end position="180"/>
    </location>
</feature>
<feature type="domain" description="4Fe-4S ferredoxin-type 1" evidence="1">
    <location>
        <begin position="50"/>
        <end position="80"/>
    </location>
</feature>
<feature type="domain" description="4Fe-4S ferredoxin-type 2" evidence="1">
    <location>
        <begin position="90"/>
        <end position="119"/>
    </location>
</feature>
<feature type="binding site" evidence="1">
    <location>
        <position position="60"/>
    </location>
    <ligand>
        <name>[4Fe-4S] cluster</name>
        <dbReference type="ChEBI" id="CHEBI:49883"/>
        <label>1</label>
    </ligand>
</feature>
<feature type="binding site" evidence="1">
    <location>
        <position position="63"/>
    </location>
    <ligand>
        <name>[4Fe-4S] cluster</name>
        <dbReference type="ChEBI" id="CHEBI:49883"/>
        <label>1</label>
    </ligand>
</feature>
<feature type="binding site" evidence="1">
    <location>
        <position position="66"/>
    </location>
    <ligand>
        <name>[4Fe-4S] cluster</name>
        <dbReference type="ChEBI" id="CHEBI:49883"/>
        <label>1</label>
    </ligand>
</feature>
<feature type="binding site" evidence="1">
    <location>
        <position position="70"/>
    </location>
    <ligand>
        <name>[4Fe-4S] cluster</name>
        <dbReference type="ChEBI" id="CHEBI:49883"/>
        <label>2</label>
    </ligand>
</feature>
<feature type="binding site" evidence="1">
    <location>
        <position position="99"/>
    </location>
    <ligand>
        <name>[4Fe-4S] cluster</name>
        <dbReference type="ChEBI" id="CHEBI:49883"/>
        <label>2</label>
    </ligand>
</feature>
<feature type="binding site" evidence="1">
    <location>
        <position position="102"/>
    </location>
    <ligand>
        <name>[4Fe-4S] cluster</name>
        <dbReference type="ChEBI" id="CHEBI:49883"/>
        <label>2</label>
    </ligand>
</feature>
<feature type="binding site" evidence="1">
    <location>
        <position position="105"/>
    </location>
    <ligand>
        <name>[4Fe-4S] cluster</name>
        <dbReference type="ChEBI" id="CHEBI:49883"/>
        <label>2</label>
    </ligand>
</feature>
<feature type="binding site" evidence="1">
    <location>
        <position position="109"/>
    </location>
    <ligand>
        <name>[4Fe-4S] cluster</name>
        <dbReference type="ChEBI" id="CHEBI:49883"/>
        <label>1</label>
    </ligand>
</feature>
<reference key="1">
    <citation type="journal article" date="2006" name="BMC Genomics">
        <title>Complete genome sequence of Shigella flexneri 5b and comparison with Shigella flexneri 2a.</title>
        <authorList>
            <person name="Nie H."/>
            <person name="Yang F."/>
            <person name="Zhang X."/>
            <person name="Yang J."/>
            <person name="Chen L."/>
            <person name="Wang J."/>
            <person name="Xiong Z."/>
            <person name="Peng J."/>
            <person name="Sun L."/>
            <person name="Dong J."/>
            <person name="Xue Y."/>
            <person name="Xu X."/>
            <person name="Chen S."/>
            <person name="Yao Z."/>
            <person name="Shen Y."/>
            <person name="Jin Q."/>
        </authorList>
    </citation>
    <scope>NUCLEOTIDE SEQUENCE [LARGE SCALE GENOMIC DNA]</scope>
    <source>
        <strain>8401</strain>
    </source>
</reference>
<accession>Q0T2K6</accession>
<protein>
    <recommendedName>
        <fullName evidence="1">NADH-quinone oxidoreductase subunit I</fullName>
        <ecNumber evidence="1">7.1.1.-</ecNumber>
    </recommendedName>
    <alternativeName>
        <fullName evidence="1">NADH dehydrogenase I subunit I</fullName>
    </alternativeName>
    <alternativeName>
        <fullName evidence="1">NDH-1 subunit I</fullName>
    </alternativeName>
</protein>
<keyword id="KW-0004">4Fe-4S</keyword>
<keyword id="KW-0997">Cell inner membrane</keyword>
<keyword id="KW-1003">Cell membrane</keyword>
<keyword id="KW-0408">Iron</keyword>
<keyword id="KW-0411">Iron-sulfur</keyword>
<keyword id="KW-0472">Membrane</keyword>
<keyword id="KW-0479">Metal-binding</keyword>
<keyword id="KW-0520">NAD</keyword>
<keyword id="KW-0874">Quinone</keyword>
<keyword id="KW-0677">Repeat</keyword>
<keyword id="KW-1278">Translocase</keyword>
<keyword id="KW-0830">Ubiquinone</keyword>
<evidence type="ECO:0000255" key="1">
    <source>
        <dbReference type="HAMAP-Rule" id="MF_01351"/>
    </source>
</evidence>